<reference key="1">
    <citation type="journal article" date="2005" name="Nature">
        <title>The genome sequence of the rice blast fungus Magnaporthe grisea.</title>
        <authorList>
            <person name="Dean R.A."/>
            <person name="Talbot N.J."/>
            <person name="Ebbole D.J."/>
            <person name="Farman M.L."/>
            <person name="Mitchell T.K."/>
            <person name="Orbach M.J."/>
            <person name="Thon M.R."/>
            <person name="Kulkarni R."/>
            <person name="Xu J.-R."/>
            <person name="Pan H."/>
            <person name="Read N.D."/>
            <person name="Lee Y.-H."/>
            <person name="Carbone I."/>
            <person name="Brown D."/>
            <person name="Oh Y.Y."/>
            <person name="Donofrio N."/>
            <person name="Jeong J.S."/>
            <person name="Soanes D.M."/>
            <person name="Djonovic S."/>
            <person name="Kolomiets E."/>
            <person name="Rehmeyer C."/>
            <person name="Li W."/>
            <person name="Harding M."/>
            <person name="Kim S."/>
            <person name="Lebrun M.-H."/>
            <person name="Bohnert H."/>
            <person name="Coughlan S."/>
            <person name="Butler J."/>
            <person name="Calvo S.E."/>
            <person name="Ma L.-J."/>
            <person name="Nicol R."/>
            <person name="Purcell S."/>
            <person name="Nusbaum C."/>
            <person name="Galagan J.E."/>
            <person name="Birren B.W."/>
        </authorList>
    </citation>
    <scope>NUCLEOTIDE SEQUENCE [LARGE SCALE GENOMIC DNA]</scope>
    <source>
        <strain>70-15 / ATCC MYA-4617 / FGSC 8958</strain>
    </source>
</reference>
<evidence type="ECO:0000250" key="1"/>
<evidence type="ECO:0000255" key="2"/>
<evidence type="ECO:0000255" key="3">
    <source>
        <dbReference type="PROSITE-ProRule" id="PRU00272"/>
    </source>
</evidence>
<evidence type="ECO:0000256" key="4">
    <source>
        <dbReference type="SAM" id="MobiDB-lite"/>
    </source>
</evidence>
<evidence type="ECO:0000305" key="5"/>
<dbReference type="EC" id="3.1.-.-"/>
<dbReference type="EMBL" id="CM001232">
    <property type="protein sequence ID" value="EHA53878.1"/>
    <property type="molecule type" value="Genomic_DNA"/>
</dbReference>
<dbReference type="RefSeq" id="XP_003713685.1">
    <property type="nucleotide sequence ID" value="XM_003713637.1"/>
</dbReference>
<dbReference type="SMR" id="A4RMK0"/>
<dbReference type="FunCoup" id="A4RMK0">
    <property type="interactions" value="14"/>
</dbReference>
<dbReference type="STRING" id="242507.A4RMK0"/>
<dbReference type="EnsemblFungi" id="MGG_04702T0">
    <property type="protein sequence ID" value="MGG_04702T0"/>
    <property type="gene ID" value="MGG_04702"/>
</dbReference>
<dbReference type="GeneID" id="2678200"/>
<dbReference type="KEGG" id="mgr:MGG_04702"/>
<dbReference type="VEuPathDB" id="FungiDB:MGG_04702"/>
<dbReference type="eggNOG" id="ENOG502S1U4">
    <property type="taxonomic scope" value="Eukaryota"/>
</dbReference>
<dbReference type="HOGENOM" id="CLU_046484_0_1_1"/>
<dbReference type="InParanoid" id="A4RMK0"/>
<dbReference type="OMA" id="IYHTPGG"/>
<dbReference type="OrthoDB" id="430293at2759"/>
<dbReference type="Proteomes" id="UP000009058">
    <property type="component" value="Chromosome 2"/>
</dbReference>
<dbReference type="GO" id="GO:0016020">
    <property type="term" value="C:membrane"/>
    <property type="evidence" value="ECO:0007669"/>
    <property type="project" value="UniProtKB-SubCell"/>
</dbReference>
<dbReference type="GO" id="GO:0005739">
    <property type="term" value="C:mitochondrion"/>
    <property type="evidence" value="ECO:0007669"/>
    <property type="project" value="UniProtKB-SubCell"/>
</dbReference>
<dbReference type="GO" id="GO:0004519">
    <property type="term" value="F:endonuclease activity"/>
    <property type="evidence" value="ECO:0007669"/>
    <property type="project" value="UniProtKB-KW"/>
</dbReference>
<dbReference type="GO" id="GO:0046872">
    <property type="term" value="F:metal ion binding"/>
    <property type="evidence" value="ECO:0007669"/>
    <property type="project" value="UniProtKB-KW"/>
</dbReference>
<dbReference type="FunFam" id="2.40.50.90:FF:000029">
    <property type="entry name" value="Probable endonuclease lcl3"/>
    <property type="match status" value="1"/>
</dbReference>
<dbReference type="Gene3D" id="2.40.50.90">
    <property type="match status" value="1"/>
</dbReference>
<dbReference type="InterPro" id="IPR035437">
    <property type="entry name" value="SNase_OB-fold_sf"/>
</dbReference>
<dbReference type="InterPro" id="IPR016071">
    <property type="entry name" value="Staphylococal_nuclease_OB-fold"/>
</dbReference>
<dbReference type="PANTHER" id="PTHR12302">
    <property type="entry name" value="EBNA2 BINDING PROTEIN P100"/>
    <property type="match status" value="1"/>
</dbReference>
<dbReference type="PANTHER" id="PTHR12302:SF3">
    <property type="entry name" value="SERINE_THREONINE-PROTEIN KINASE 31"/>
    <property type="match status" value="1"/>
</dbReference>
<dbReference type="Pfam" id="PF00565">
    <property type="entry name" value="SNase"/>
    <property type="match status" value="1"/>
</dbReference>
<dbReference type="SMART" id="SM00318">
    <property type="entry name" value="SNc"/>
    <property type="match status" value="1"/>
</dbReference>
<dbReference type="SUPFAM" id="SSF50199">
    <property type="entry name" value="Staphylococcal nuclease"/>
    <property type="match status" value="1"/>
</dbReference>
<dbReference type="PROSITE" id="PS50830">
    <property type="entry name" value="TNASE_3"/>
    <property type="match status" value="1"/>
</dbReference>
<accession>A4RMK0</accession>
<accession>G4MTD2</accession>
<gene>
    <name type="primary">LCL3</name>
    <name type="ORF">MGG_04702</name>
</gene>
<proteinExistence type="inferred from homology"/>
<sequence length="257" mass="29548">MMRWPWSSDSSDGPKPARHWNESLNKTDWEHYKEPRNWVPTAIATTTILAAVQFYRSYLRRIPGTNYIHPGFFRRRSLFGRVTSVGDGDNFHLFHTPGGRLAGWSWLRSIPTERKALKGKTIPVRIAGVDAPEAAHFGREAQPFSAEALEFLKSYILGRDVRTYIYRRDQYERVVGTVWVRRWLLRKDVGLEMIKRGLATVYDAKIGAEFGGLEEKYRAAEAKAKLKKLGMWGAKGKFESPRDYKNRHAATSESKLS</sequence>
<keyword id="KW-0106">Calcium</keyword>
<keyword id="KW-0255">Endonuclease</keyword>
<keyword id="KW-0378">Hydrolase</keyword>
<keyword id="KW-0472">Membrane</keyword>
<keyword id="KW-0479">Metal-binding</keyword>
<keyword id="KW-0496">Mitochondrion</keyword>
<keyword id="KW-0540">Nuclease</keyword>
<keyword id="KW-1185">Reference proteome</keyword>
<keyword id="KW-0812">Transmembrane</keyword>
<keyword id="KW-1133">Transmembrane helix</keyword>
<organism>
    <name type="scientific">Pyricularia oryzae (strain 70-15 / ATCC MYA-4617 / FGSC 8958)</name>
    <name type="common">Rice blast fungus</name>
    <name type="synonym">Magnaporthe oryzae</name>
    <dbReference type="NCBI Taxonomy" id="242507"/>
    <lineage>
        <taxon>Eukaryota</taxon>
        <taxon>Fungi</taxon>
        <taxon>Dikarya</taxon>
        <taxon>Ascomycota</taxon>
        <taxon>Pezizomycotina</taxon>
        <taxon>Sordariomycetes</taxon>
        <taxon>Sordariomycetidae</taxon>
        <taxon>Magnaporthales</taxon>
        <taxon>Pyriculariaceae</taxon>
        <taxon>Pyricularia</taxon>
    </lineage>
</organism>
<comment type="subcellular location">
    <subcellularLocation>
        <location>Mitochondrion</location>
    </subcellularLocation>
    <subcellularLocation>
        <location evidence="1">Membrane</location>
        <topology evidence="1">Single-pass membrane protein</topology>
    </subcellularLocation>
</comment>
<comment type="similarity">
    <text evidence="5">Belongs to the LCL3 family.</text>
</comment>
<feature type="chain" id="PRO_0000408667" description="Probable endonuclease LCL3">
    <location>
        <begin position="1"/>
        <end position="257"/>
    </location>
</feature>
<feature type="transmembrane region" description="Helical" evidence="2">
    <location>
        <begin position="39"/>
        <end position="55"/>
    </location>
</feature>
<feature type="domain" description="TNase-like" evidence="3">
    <location>
        <begin position="76"/>
        <end position="234"/>
    </location>
</feature>
<feature type="region of interest" description="Disordered" evidence="4">
    <location>
        <begin position="236"/>
        <end position="257"/>
    </location>
</feature>
<feature type="compositionally biased region" description="Basic and acidic residues" evidence="4">
    <location>
        <begin position="236"/>
        <end position="246"/>
    </location>
</feature>
<feature type="active site" evidence="3">
    <location>
        <position position="125"/>
    </location>
</feature>
<feature type="active site" evidence="3">
    <location>
        <position position="133"/>
    </location>
</feature>
<feature type="active site" evidence="3">
    <location>
        <position position="173"/>
    </location>
</feature>
<feature type="binding site" evidence="3">
    <location>
        <position position="130"/>
    </location>
    <ligand>
        <name>Ca(2+)</name>
        <dbReference type="ChEBI" id="CHEBI:29108"/>
    </ligand>
</feature>
<protein>
    <recommendedName>
        <fullName>Probable endonuclease LCL3</fullName>
        <ecNumber>3.1.-.-</ecNumber>
    </recommendedName>
</protein>
<name>LCL3_PYRO7</name>